<evidence type="ECO:0000250" key="1">
    <source>
        <dbReference type="UniProtKB" id="P05648"/>
    </source>
</evidence>
<evidence type="ECO:0000255" key="2">
    <source>
        <dbReference type="HAMAP-Rule" id="MF_00377"/>
    </source>
</evidence>
<evidence type="ECO:0000269" key="3">
    <source>
    </source>
</evidence>
<evidence type="ECO:0000303" key="4">
    <source>
    </source>
</evidence>
<name>DNAA_STRP2</name>
<proteinExistence type="evidence at protein level"/>
<organism>
    <name type="scientific">Streptococcus pneumoniae serotype 2 (strain D39 / NCTC 7466)</name>
    <dbReference type="NCBI Taxonomy" id="373153"/>
    <lineage>
        <taxon>Bacteria</taxon>
        <taxon>Bacillati</taxon>
        <taxon>Bacillota</taxon>
        <taxon>Bacilli</taxon>
        <taxon>Lactobacillales</taxon>
        <taxon>Streptococcaceae</taxon>
        <taxon>Streptococcus</taxon>
    </lineage>
</organism>
<protein>
    <recommendedName>
        <fullName evidence="2">Chromosomal replication initiator protein DnaA</fullName>
    </recommendedName>
</protein>
<dbReference type="EMBL" id="CP000410">
    <property type="protein sequence ID" value="ABJ54349.1"/>
    <property type="molecule type" value="Genomic_DNA"/>
</dbReference>
<dbReference type="RefSeq" id="WP_000660615.1">
    <property type="nucleotide sequence ID" value="NZ_JAMLJR010000007.1"/>
</dbReference>
<dbReference type="SMR" id="Q04N63"/>
<dbReference type="PaxDb" id="373153-SPD_0001"/>
<dbReference type="GeneID" id="45652535"/>
<dbReference type="KEGG" id="spd:SPD_0001"/>
<dbReference type="eggNOG" id="COG0593">
    <property type="taxonomic scope" value="Bacteria"/>
</dbReference>
<dbReference type="HOGENOM" id="CLU_026910_3_1_9"/>
<dbReference type="BioCyc" id="SPNE373153:G1G6V-1-MONOMER"/>
<dbReference type="Proteomes" id="UP000001452">
    <property type="component" value="Chromosome"/>
</dbReference>
<dbReference type="GO" id="GO:0005737">
    <property type="term" value="C:cytoplasm"/>
    <property type="evidence" value="ECO:0007669"/>
    <property type="project" value="UniProtKB-SubCell"/>
</dbReference>
<dbReference type="GO" id="GO:0005886">
    <property type="term" value="C:plasma membrane"/>
    <property type="evidence" value="ECO:0007669"/>
    <property type="project" value="TreeGrafter"/>
</dbReference>
<dbReference type="GO" id="GO:0005524">
    <property type="term" value="F:ATP binding"/>
    <property type="evidence" value="ECO:0007669"/>
    <property type="project" value="UniProtKB-UniRule"/>
</dbReference>
<dbReference type="GO" id="GO:0016887">
    <property type="term" value="F:ATP hydrolysis activity"/>
    <property type="evidence" value="ECO:0007669"/>
    <property type="project" value="InterPro"/>
</dbReference>
<dbReference type="GO" id="GO:0003688">
    <property type="term" value="F:DNA replication origin binding"/>
    <property type="evidence" value="ECO:0007669"/>
    <property type="project" value="UniProtKB-UniRule"/>
</dbReference>
<dbReference type="GO" id="GO:0008289">
    <property type="term" value="F:lipid binding"/>
    <property type="evidence" value="ECO:0007669"/>
    <property type="project" value="UniProtKB-KW"/>
</dbReference>
<dbReference type="GO" id="GO:0006270">
    <property type="term" value="P:DNA replication initiation"/>
    <property type="evidence" value="ECO:0000315"/>
    <property type="project" value="UniProtKB"/>
</dbReference>
<dbReference type="GO" id="GO:0006275">
    <property type="term" value="P:regulation of DNA replication"/>
    <property type="evidence" value="ECO:0000315"/>
    <property type="project" value="UniProtKB"/>
</dbReference>
<dbReference type="CDD" id="cd00009">
    <property type="entry name" value="AAA"/>
    <property type="match status" value="1"/>
</dbReference>
<dbReference type="CDD" id="cd06571">
    <property type="entry name" value="Bac_DnaA_C"/>
    <property type="match status" value="1"/>
</dbReference>
<dbReference type="FunFam" id="1.10.1750.10:FF:000002">
    <property type="entry name" value="Chromosomal replication initiator protein DnaA"/>
    <property type="match status" value="1"/>
</dbReference>
<dbReference type="FunFam" id="1.10.8.60:FF:000129">
    <property type="entry name" value="Chromosomal replication initiator protein DnaA"/>
    <property type="match status" value="1"/>
</dbReference>
<dbReference type="FunFam" id="3.40.50.300:FF:000668">
    <property type="entry name" value="Chromosomal replication initiator protein DnaA"/>
    <property type="match status" value="1"/>
</dbReference>
<dbReference type="Gene3D" id="1.10.1750.10">
    <property type="match status" value="1"/>
</dbReference>
<dbReference type="Gene3D" id="1.10.8.60">
    <property type="match status" value="1"/>
</dbReference>
<dbReference type="Gene3D" id="3.40.50.300">
    <property type="entry name" value="P-loop containing nucleotide triphosphate hydrolases"/>
    <property type="match status" value="1"/>
</dbReference>
<dbReference type="HAMAP" id="MF_00377">
    <property type="entry name" value="DnaA_bact"/>
    <property type="match status" value="1"/>
</dbReference>
<dbReference type="InterPro" id="IPR003593">
    <property type="entry name" value="AAA+_ATPase"/>
</dbReference>
<dbReference type="InterPro" id="IPR001957">
    <property type="entry name" value="Chromosome_initiator_DnaA"/>
</dbReference>
<dbReference type="InterPro" id="IPR020591">
    <property type="entry name" value="Chromosome_initiator_DnaA-like"/>
</dbReference>
<dbReference type="InterPro" id="IPR018312">
    <property type="entry name" value="Chromosome_initiator_DnaA_CS"/>
</dbReference>
<dbReference type="InterPro" id="IPR013159">
    <property type="entry name" value="DnaA_C"/>
</dbReference>
<dbReference type="InterPro" id="IPR013317">
    <property type="entry name" value="DnaA_dom"/>
</dbReference>
<dbReference type="InterPro" id="IPR027417">
    <property type="entry name" value="P-loop_NTPase"/>
</dbReference>
<dbReference type="InterPro" id="IPR010921">
    <property type="entry name" value="Trp_repressor/repl_initiator"/>
</dbReference>
<dbReference type="NCBIfam" id="TIGR00362">
    <property type="entry name" value="DnaA"/>
    <property type="match status" value="1"/>
</dbReference>
<dbReference type="PANTHER" id="PTHR30050">
    <property type="entry name" value="CHROMOSOMAL REPLICATION INITIATOR PROTEIN DNAA"/>
    <property type="match status" value="1"/>
</dbReference>
<dbReference type="PANTHER" id="PTHR30050:SF2">
    <property type="entry name" value="CHROMOSOMAL REPLICATION INITIATOR PROTEIN DNAA"/>
    <property type="match status" value="1"/>
</dbReference>
<dbReference type="Pfam" id="PF00308">
    <property type="entry name" value="Bac_DnaA"/>
    <property type="match status" value="1"/>
</dbReference>
<dbReference type="Pfam" id="PF08299">
    <property type="entry name" value="Bac_DnaA_C"/>
    <property type="match status" value="1"/>
</dbReference>
<dbReference type="PRINTS" id="PR00051">
    <property type="entry name" value="DNAA"/>
</dbReference>
<dbReference type="SMART" id="SM00382">
    <property type="entry name" value="AAA"/>
    <property type="match status" value="1"/>
</dbReference>
<dbReference type="SMART" id="SM00760">
    <property type="entry name" value="Bac_DnaA_C"/>
    <property type="match status" value="1"/>
</dbReference>
<dbReference type="SUPFAM" id="SSF52540">
    <property type="entry name" value="P-loop containing nucleoside triphosphate hydrolases"/>
    <property type="match status" value="1"/>
</dbReference>
<dbReference type="SUPFAM" id="SSF48295">
    <property type="entry name" value="TrpR-like"/>
    <property type="match status" value="1"/>
</dbReference>
<dbReference type="PROSITE" id="PS01008">
    <property type="entry name" value="DNAA"/>
    <property type="match status" value="1"/>
</dbReference>
<reference key="1">
    <citation type="journal article" date="2007" name="J. Bacteriol.">
        <title>Genome sequence of Avery's virulent serotype 2 strain D39 of Streptococcus pneumoniae and comparison with that of unencapsulated laboratory strain R6.</title>
        <authorList>
            <person name="Lanie J.A."/>
            <person name="Ng W.-L."/>
            <person name="Kazmierczak K.M."/>
            <person name="Andrzejewski T.M."/>
            <person name="Davidsen T.M."/>
            <person name="Wayne K.J."/>
            <person name="Tettelin H."/>
            <person name="Glass J.I."/>
            <person name="Winkler M.E."/>
        </authorList>
    </citation>
    <scope>NUCLEOTIDE SEQUENCE [LARGE SCALE GENOMIC DNA]</scope>
    <source>
        <strain>D39 / NCTC 7466</strain>
    </source>
</reference>
<reference key="2">
    <citation type="journal article" date="2021" name="Nat. Microbiol.">
        <title>CcrZ is a pneumococcal spatiotemporal cell cycle regulator that interacts with FtsZ and controls DNA replication by modulating the activity of DnaA.</title>
        <authorList>
            <person name="Gallay C."/>
            <person name="Sanselicio S."/>
            <person name="Anderson M.E."/>
            <person name="Soh Y.M."/>
            <person name="Liu X."/>
            <person name="Stamsaas G.A."/>
            <person name="Pelliciari S."/>
            <person name="van Raaphorst R."/>
            <person name="Denereaz J."/>
            <person name="Kjos M."/>
            <person name="Murray H."/>
            <person name="Gruber S."/>
            <person name="Grossman A.D."/>
            <person name="Veening J.W."/>
        </authorList>
    </citation>
    <scope>FUNCTION</scope>
    <scope>ACTIVITY REGULATION</scope>
    <scope>SUBCELLULAR LOCATION</scope>
    <scope>MUTAGENESIS OF GLN-247; SER-292 AND MET-398</scope>
    <source>
        <strain evidence="4">D39V / serotype 2</strain>
    </source>
</reference>
<accession>Q04N63</accession>
<sequence>MKEKQFWNRILEFAQERLTRSMYDFYAIQAELIKVEENVATIFLPRSEMEMVWEKQLKDIIVVAGFEIYDAEITPHYIFTKPQDTTSSQVEEATNLTLYDYSPKLVSIPYSDTGLKEKYTFDNFIQGDGNVWAVSAALAVSEDLALTYNPLFIYGGPGLGKTHLLNAIGNEILKNIPNARVKYIPAESFINDFLDHLRLGEMEKFKKTYRSLDLLLIDDIQSLSGKKVATQEEFFNTFNALHDKQKQIVLTSDRSPKHLEGLEERLVTRFSWGLTQTITPPDFETRIAILQSKTEHLGYNFQSDTLEYLAGQFDSNVRDLEGAINDITLIARVKKIKDITIDIAAEAIRARKQDVSQMLVIPIDKIQTEVGNFYGVSIKEMKGSRRLQNIVLARQVAMYLSRELTDNSLPKIGKEFGGKDHTTVIHAHAKIKSLIDQDDNLRLEIESIKKKIK</sequence>
<keyword id="KW-0067">ATP-binding</keyword>
<keyword id="KW-0963">Cytoplasm</keyword>
<keyword id="KW-0235">DNA replication</keyword>
<keyword id="KW-0238">DNA-binding</keyword>
<keyword id="KW-0446">Lipid-binding</keyword>
<keyword id="KW-0547">Nucleotide-binding</keyword>
<keyword id="KW-1185">Reference proteome</keyword>
<gene>
    <name evidence="2" type="primary">dnaA</name>
    <name type="ordered locus">SPD_0001</name>
</gene>
<comment type="function">
    <text evidence="2 3">Plays an essential role in the initiation and regulation of chromosomal replication (PubMed:34373624). ATP-DnaA binds to the origin of replication (oriC) to initiate formation of the DNA replication initiation complex once per cell cycle. Binds the DnaA box (a 9 base pair repeat at the origin) and separates the double-stranded (ds)DNA. Forms a right-handed helical filament on oriC DNA; dsDNA binds to the exterior of the filament while single-stranded (ss)DNA is stabiized in the filament's interior. The ATP-DnaA-oriC complex binds and stabilizes one strand of the AT-rich DNA unwinding element (DUE), permitting loading of DNA polymerase. After initiation quickly degrades to an ADP-DnaA complex that is not apt for DNA replication. Binds acidic phospholipids.</text>
</comment>
<comment type="function">
    <text evidence="3">Mutations in this gene suppress a deletion of cell cycle regulator ccrZ.</text>
</comment>
<comment type="activity regulation">
    <text evidence="3">CcrZ stimulates DnaA, possibly by phosphorylation of an intermediate molecule, to initiate DNA replication.</text>
</comment>
<comment type="subunit">
    <text evidence="1 2">Oligomerizes as a right-handed, spiral filament on DNA at oriC. Interacts (via domains I and III) with CcrZ (By similarity).</text>
</comment>
<comment type="subcellular location">
    <subcellularLocation>
        <location evidence="2">Cytoplasm</location>
    </subcellularLocation>
    <text evidence="3">Colocalizes with CcrZ in newborn cells.</text>
</comment>
<comment type="domain">
    <text evidence="2">Domain I is involved in oligomerization and binding regulators, domain II is flexibile and of varying length in different bacteria, domain III forms the AAA+ region, while domain IV binds dsDNA.</text>
</comment>
<comment type="similarity">
    <text evidence="2">Belongs to the DnaA family.</text>
</comment>
<feature type="chain" id="PRO_1000048738" description="Chromosomal replication initiator protein DnaA">
    <location>
        <begin position="1"/>
        <end position="453"/>
    </location>
</feature>
<feature type="region of interest" description="Domain I, interacts with DnaA modulators" evidence="2">
    <location>
        <begin position="1"/>
        <end position="74"/>
    </location>
</feature>
<feature type="region of interest" description="Domain II" evidence="2">
    <location>
        <begin position="74"/>
        <end position="113"/>
    </location>
</feature>
<feature type="region of interest" description="Domain III, AAA+ region" evidence="2">
    <location>
        <begin position="114"/>
        <end position="331"/>
    </location>
</feature>
<feature type="region of interest" description="Domain IV, binds dsDNA" evidence="2">
    <location>
        <begin position="332"/>
        <end position="453"/>
    </location>
</feature>
<feature type="binding site" evidence="2">
    <location>
        <position position="158"/>
    </location>
    <ligand>
        <name>ATP</name>
        <dbReference type="ChEBI" id="CHEBI:30616"/>
    </ligand>
</feature>
<feature type="binding site" evidence="2">
    <location>
        <position position="160"/>
    </location>
    <ligand>
        <name>ATP</name>
        <dbReference type="ChEBI" id="CHEBI:30616"/>
    </ligand>
</feature>
<feature type="binding site" evidence="2">
    <location>
        <position position="161"/>
    </location>
    <ligand>
        <name>ATP</name>
        <dbReference type="ChEBI" id="CHEBI:30616"/>
    </ligand>
</feature>
<feature type="binding site" evidence="2">
    <location>
        <position position="162"/>
    </location>
    <ligand>
        <name>ATP</name>
        <dbReference type="ChEBI" id="CHEBI:30616"/>
    </ligand>
</feature>
<feature type="mutagenesis site" description="Overinitiation of DNA replication. Rescues DNA replication initiation defect of ccrZ deletion mutant." evidence="3">
    <original>Q</original>
    <variation>H</variation>
    <location>
        <position position="247"/>
    </location>
</feature>
<feature type="mutagenesis site" description="Overinitiation of DNA replication. Rescues DNA replication initiation defect of ccrZ deletion mutant." evidence="3">
    <original>S</original>
    <variation>G</variation>
    <location>
        <position position="292"/>
    </location>
</feature>
<feature type="mutagenesis site" description="Thermosensitive. Many anucleate cells, cells with aberrant septa and mislocalized FtsZ at 40 degrees Celsius." evidence="3">
    <original>M</original>
    <variation>T</variation>
    <location>
        <position position="398"/>
    </location>
</feature>